<protein>
    <recommendedName>
        <fullName evidence="1">Mannonate dehydratase</fullName>
        <ecNumber evidence="1">4.2.1.8</ecNumber>
    </recommendedName>
    <alternativeName>
        <fullName evidence="1">D-mannonate hydro-lyase</fullName>
    </alternativeName>
</protein>
<organism>
    <name type="scientific">Vibrio vulnificus (strain CMCP6)</name>
    <dbReference type="NCBI Taxonomy" id="216895"/>
    <lineage>
        <taxon>Bacteria</taxon>
        <taxon>Pseudomonadati</taxon>
        <taxon>Pseudomonadota</taxon>
        <taxon>Gammaproteobacteria</taxon>
        <taxon>Vibrionales</taxon>
        <taxon>Vibrionaceae</taxon>
        <taxon>Vibrio</taxon>
    </lineage>
</organism>
<gene>
    <name evidence="1" type="primary">uxuA</name>
    <name type="ordered locus">VV2_1064</name>
</gene>
<keyword id="KW-0408">Iron</keyword>
<keyword id="KW-0456">Lyase</keyword>
<keyword id="KW-0464">Manganese</keyword>
<evidence type="ECO:0000255" key="1">
    <source>
        <dbReference type="HAMAP-Rule" id="MF_00106"/>
    </source>
</evidence>
<reference key="1">
    <citation type="submission" date="2002-12" db="EMBL/GenBank/DDBJ databases">
        <title>Complete genome sequence of Vibrio vulnificus CMCP6.</title>
        <authorList>
            <person name="Rhee J.H."/>
            <person name="Kim S.Y."/>
            <person name="Chung S.S."/>
            <person name="Kim J.J."/>
            <person name="Moon Y.H."/>
            <person name="Jeong H."/>
            <person name="Choy H.E."/>
        </authorList>
    </citation>
    <scope>NUCLEOTIDE SEQUENCE [LARGE SCALE GENOMIC DNA]</scope>
    <source>
        <strain>CMCP6</strain>
    </source>
</reference>
<feature type="chain" id="PRO_0000170692" description="Mannonate dehydratase">
    <location>
        <begin position="1"/>
        <end position="395"/>
    </location>
</feature>
<accession>Q8D562</accession>
<dbReference type="EC" id="4.2.1.8" evidence="1"/>
<dbReference type="EMBL" id="AE016796">
    <property type="protein sequence ID" value="AAO07971.1"/>
    <property type="molecule type" value="Genomic_DNA"/>
</dbReference>
<dbReference type="RefSeq" id="WP_011081966.1">
    <property type="nucleotide sequence ID" value="NC_004460.2"/>
</dbReference>
<dbReference type="SMR" id="Q8D562"/>
<dbReference type="KEGG" id="vvu:VV2_1064"/>
<dbReference type="HOGENOM" id="CLU_058621_2_0_6"/>
<dbReference type="UniPathway" id="UPA00246"/>
<dbReference type="Proteomes" id="UP000002275">
    <property type="component" value="Chromosome 2"/>
</dbReference>
<dbReference type="GO" id="GO:0008198">
    <property type="term" value="F:ferrous iron binding"/>
    <property type="evidence" value="ECO:0007669"/>
    <property type="project" value="TreeGrafter"/>
</dbReference>
<dbReference type="GO" id="GO:0030145">
    <property type="term" value="F:manganese ion binding"/>
    <property type="evidence" value="ECO:0007669"/>
    <property type="project" value="TreeGrafter"/>
</dbReference>
<dbReference type="GO" id="GO:0008927">
    <property type="term" value="F:mannonate dehydratase activity"/>
    <property type="evidence" value="ECO:0007669"/>
    <property type="project" value="UniProtKB-UniRule"/>
</dbReference>
<dbReference type="GO" id="GO:0042840">
    <property type="term" value="P:D-glucuronate catabolic process"/>
    <property type="evidence" value="ECO:0007669"/>
    <property type="project" value="TreeGrafter"/>
</dbReference>
<dbReference type="FunFam" id="3.20.20.150:FF:000004">
    <property type="entry name" value="Mannonate dehydratase"/>
    <property type="match status" value="1"/>
</dbReference>
<dbReference type="FunFam" id="3.20.20.150:FF:000005">
    <property type="entry name" value="Mannonate dehydratase"/>
    <property type="match status" value="1"/>
</dbReference>
<dbReference type="Gene3D" id="3.20.20.150">
    <property type="entry name" value="Divalent-metal-dependent TIM barrel enzymes"/>
    <property type="match status" value="2"/>
</dbReference>
<dbReference type="HAMAP" id="MF_00106">
    <property type="entry name" value="UxuA"/>
    <property type="match status" value="1"/>
</dbReference>
<dbReference type="InterPro" id="IPR004628">
    <property type="entry name" value="Man_deHydtase"/>
</dbReference>
<dbReference type="InterPro" id="IPR036237">
    <property type="entry name" value="Xyl_isomerase-like_sf"/>
</dbReference>
<dbReference type="NCBIfam" id="NF003027">
    <property type="entry name" value="PRK03906.1"/>
    <property type="match status" value="1"/>
</dbReference>
<dbReference type="NCBIfam" id="TIGR00695">
    <property type="entry name" value="uxuA"/>
    <property type="match status" value="1"/>
</dbReference>
<dbReference type="PANTHER" id="PTHR30387">
    <property type="entry name" value="MANNONATE DEHYDRATASE"/>
    <property type="match status" value="1"/>
</dbReference>
<dbReference type="PANTHER" id="PTHR30387:SF2">
    <property type="entry name" value="MANNONATE DEHYDRATASE"/>
    <property type="match status" value="1"/>
</dbReference>
<dbReference type="Pfam" id="PF03786">
    <property type="entry name" value="UxuA"/>
    <property type="match status" value="1"/>
</dbReference>
<dbReference type="PIRSF" id="PIRSF016049">
    <property type="entry name" value="Man_dehyd"/>
    <property type="match status" value="1"/>
</dbReference>
<dbReference type="SUPFAM" id="SSF51658">
    <property type="entry name" value="Xylose isomerase-like"/>
    <property type="match status" value="1"/>
</dbReference>
<sequence>MEQTWRWYGPNDPVSLDDIRQAGATGIVNALHHIPNGEVWSKEEILKRKAIIEAKGLTWSVVESVPVHEEIKTQTGNFQQWIDNYKQTLRNLAECGIDTVCYNFMPVLDWTRTDLEFEMPDGSKALRFDQIAFAAFELHILKRPGAEADYTEAEQAQALEYFNNMSEAQIQQLTSNIIAGLPGAEEGYTLEEFQAQLDRYAGISKDKLREHMAYFLSQLMPVCEAHGLKLAVHPDDPPRPILGLPRIVSTIEDIDWLTEKVPSKMNGLTMCTGSYGVRGDNDLVKMIKKHGERIYFTHLRSTKREESNPMTFHEAAHLDGDVDMYNVVMAILDEEQRRAEVGDHRLIPMRPDHGHQMLDDLKKKTNPGYSAIGRLKGLAEVRGLEMALKRAFYTK</sequence>
<name>UXUA_VIBVU</name>
<comment type="function">
    <text evidence="1">Catalyzes the dehydration of D-mannonate.</text>
</comment>
<comment type="catalytic activity">
    <reaction evidence="1">
        <text>D-mannonate = 2-dehydro-3-deoxy-D-gluconate + H2O</text>
        <dbReference type="Rhea" id="RHEA:20097"/>
        <dbReference type="ChEBI" id="CHEBI:15377"/>
        <dbReference type="ChEBI" id="CHEBI:17767"/>
        <dbReference type="ChEBI" id="CHEBI:57990"/>
        <dbReference type="EC" id="4.2.1.8"/>
    </reaction>
</comment>
<comment type="cofactor">
    <cofactor evidence="1">
        <name>Fe(2+)</name>
        <dbReference type="ChEBI" id="CHEBI:29033"/>
    </cofactor>
    <cofactor evidence="1">
        <name>Mn(2+)</name>
        <dbReference type="ChEBI" id="CHEBI:29035"/>
    </cofactor>
</comment>
<comment type="pathway">
    <text evidence="1">Carbohydrate metabolism; pentose and glucuronate interconversion.</text>
</comment>
<comment type="similarity">
    <text evidence="1">Belongs to the mannonate dehydratase family.</text>
</comment>
<proteinExistence type="inferred from homology"/>